<protein>
    <recommendedName>
        <fullName>NAD(+)--dinitrogen-reductase ADP-D-ribosyltransferase</fullName>
        <shortName>ADP-ribosyltransferase</shortName>
        <ecNumber evidence="1">2.4.2.37</ecNumber>
    </recommendedName>
    <alternativeName>
        <fullName evidence="2">Dinitrogenase reductase ADP-ribosyltransferase</fullName>
        <shortName evidence="2">DRAT</shortName>
    </alternativeName>
</protein>
<reference key="1">
    <citation type="journal article" date="1989" name="Mol. Gen. Genet.">
        <title>Genes coding for the reversible ADP-ribosylation system of dinitrogenase reductase from Rhodospirillum rubrum.</title>
        <authorList>
            <person name="Fitzmaurice W.P."/>
            <person name="Saari L.L."/>
            <person name="Lowery R.G."/>
            <person name="Ludden P.W."/>
            <person name="Roberts G.P."/>
        </authorList>
    </citation>
    <scope>NUCLEOTIDE SEQUENCE [GENOMIC DNA]</scope>
    <scope>PROTEIN SEQUENCE OF 1-12 AND 14-22</scope>
    <source>
        <strain>UR2</strain>
    </source>
</reference>
<reference key="2">
    <citation type="journal article" date="1988" name="J. Biol. Chem.">
        <title>Purification and properties of dinitrogenase reductase ADP-ribosyltransferase from the photosynthetic bacterium Rhodospirillum rubrum.</title>
        <authorList>
            <person name="Lowery R.G."/>
            <person name="Ludden P.W."/>
        </authorList>
    </citation>
    <scope>FUNCTION</scope>
    <scope>CATALYTIC ACTIVITY</scope>
    <scope>SUBUNIT</scope>
    <scope>BIOPHYSICOCHEMICAL PROPERTIES</scope>
    <scope>SUBSTRATE SPECIFICITY</scope>
</reference>
<reference key="3">
    <citation type="journal article" date="2015" name="Curr. Top. Microbiol. Immunol.">
        <title>Regulation of nitrogenase by reversible mono-ADP-ribosylation.</title>
        <authorList>
            <person name="Moure V.R."/>
            <person name="Costa F.F."/>
            <person name="Cruz L.M."/>
            <person name="Pedrosa F.O."/>
            <person name="Souza E.M."/>
            <person name="Li X.D."/>
            <person name="Winkler F."/>
            <person name="Huergo L.F."/>
        </authorList>
    </citation>
    <scope>CHARACTERIZATION</scope>
</reference>
<evidence type="ECO:0000269" key="1">
    <source>
    </source>
</evidence>
<evidence type="ECO:0000303" key="2">
    <source>
    </source>
</evidence>
<sequence length="276" mass="31234">MKDMGEDRPGIGHSTNLVGLPTDLLASAWFNQAAPEIHIAGVREMNRSLFEMLAEAPDLESAGEAFYKYMIAMFGLDPEQQDHRPGQGGAVRRFHASYLRLLKGWGYDTNAKEGAVLKGWVESRFGLFPTFHREPITKFASKAWITYIEEKMTSRFHNNSIYVQLDLMYEFCQWALARFAAPGESALLLYRGVNDFTEHQMIERIDNRQVVVRMNNLVSFSSDRGVADCFGDTILETRVPVSKIVFFNTLLTSHPLKGEGEYLVIGGDYLVKASYL</sequence>
<proteinExistence type="evidence at protein level"/>
<accession>P14299</accession>
<gene>
    <name type="primary">draT</name>
</gene>
<feature type="chain" id="PRO_0000080003" description="NAD(+)--dinitrogen-reductase ADP-D-ribosyltransferase">
    <location>
        <begin position="1"/>
        <end position="276"/>
    </location>
</feature>
<organism>
    <name type="scientific">Rhodospirillum rubrum</name>
    <dbReference type="NCBI Taxonomy" id="1085"/>
    <lineage>
        <taxon>Bacteria</taxon>
        <taxon>Pseudomonadati</taxon>
        <taxon>Pseudomonadota</taxon>
        <taxon>Alphaproteobacteria</taxon>
        <taxon>Rhodospirillales</taxon>
        <taxon>Rhodospirillaceae</taxon>
        <taxon>Rhodospirillum</taxon>
    </lineage>
</organism>
<keyword id="KW-0903">Direct protein sequencing</keyword>
<keyword id="KW-0328">Glycosyltransferase</keyword>
<keyword id="KW-0520">NAD</keyword>
<keyword id="KW-0535">Nitrogen fixation</keyword>
<keyword id="KW-0548">Nucleotidyltransferase</keyword>
<keyword id="KW-0808">Transferase</keyword>
<name>DRAT_RHORU</name>
<dbReference type="EC" id="2.4.2.37" evidence="1"/>
<dbReference type="EMBL" id="X16187">
    <property type="protein sequence ID" value="CAA34309.1"/>
    <property type="molecule type" value="Genomic_DNA"/>
</dbReference>
<dbReference type="PIR" id="S05343">
    <property type="entry name" value="S05343"/>
</dbReference>
<dbReference type="BRENDA" id="2.4.2.37">
    <property type="organism ID" value="5420"/>
</dbReference>
<dbReference type="GO" id="GO:0030701">
    <property type="term" value="F:NAD+-dinitrogen-reductase ADP-D-ribosyltransferase activity"/>
    <property type="evidence" value="ECO:0007669"/>
    <property type="project" value="UniProtKB-EC"/>
</dbReference>
<dbReference type="GO" id="GO:0016779">
    <property type="term" value="F:nucleotidyltransferase activity"/>
    <property type="evidence" value="ECO:0007669"/>
    <property type="project" value="UniProtKB-KW"/>
</dbReference>
<dbReference type="GO" id="GO:0009399">
    <property type="term" value="P:nitrogen fixation"/>
    <property type="evidence" value="ECO:0007669"/>
    <property type="project" value="UniProtKB-KW"/>
</dbReference>
<dbReference type="InterPro" id="IPR009953">
    <property type="entry name" value="DRA_trans"/>
</dbReference>
<dbReference type="Pfam" id="PF07357">
    <property type="entry name" value="DRAT"/>
    <property type="match status" value="1"/>
</dbReference>
<comment type="function">
    <text>Involved in the regulation of the nitrogen fixation activity by the reversible ADP-ribosylation of the dinitrogenase reductase component of the nitrogenase enzyme complex. The ADP-ribosyltransferase (DraT) transfers the ADP-ribose group from NAD to dinitrogenase reductase. The ADP-ribose group is removed through the action of the ADP-ribosylglycohydrolase (DraG).</text>
</comment>
<comment type="catalytic activity">
    <reaction evidence="1">
        <text>L-arginyl-[dinitrogen reductase] + NAD(+) = N(omega)-alpha-(ADP-D-ribosyl)-L-arginyl-[dinitrogen reductase] + nicotinamide + H(+)</text>
        <dbReference type="Rhea" id="RHEA:18077"/>
        <dbReference type="Rhea" id="RHEA-COMP:10789"/>
        <dbReference type="Rhea" id="RHEA-COMP:10791"/>
        <dbReference type="ChEBI" id="CHEBI:15378"/>
        <dbReference type="ChEBI" id="CHEBI:17154"/>
        <dbReference type="ChEBI" id="CHEBI:29965"/>
        <dbReference type="ChEBI" id="CHEBI:57540"/>
        <dbReference type="ChEBI" id="CHEBI:83960"/>
        <dbReference type="EC" id="2.4.2.37"/>
    </reaction>
</comment>
<comment type="biophysicochemical properties">
    <kinetics>
        <KM evidence="1">2 mM for NAD</KM>
    </kinetics>
    <phDependence>
        <text evidence="1">Optimum pH is 7.0.</text>
    </phDependence>
</comment>
<comment type="subunit">
    <text evidence="1">Monomer.</text>
</comment>